<protein>
    <recommendedName>
        <fullName>Nif-specific regulatory protein</fullName>
    </recommendedName>
</protein>
<name>NIFA_BRADU</name>
<accession>P05407</accession>
<dbReference type="EMBL" id="X06167">
    <property type="protein sequence ID" value="CAA29532.1"/>
    <property type="molecule type" value="Genomic_DNA"/>
</dbReference>
<dbReference type="EMBL" id="X06167">
    <property type="protein sequence ID" value="CAA29531.1"/>
    <property type="status" value="ALT_INIT"/>
    <property type="molecule type" value="Genomic_DNA"/>
</dbReference>
<dbReference type="EMBL" id="BA000040">
    <property type="protein sequence ID" value="BAC47302.1"/>
    <property type="status" value="ALT_INIT"/>
    <property type="molecule type" value="Genomic_DNA"/>
</dbReference>
<dbReference type="PIR" id="S01066">
    <property type="entry name" value="S01066"/>
</dbReference>
<dbReference type="RefSeq" id="NP_768677.1">
    <property type="nucleotide sequence ID" value="NC_004463.1"/>
</dbReference>
<dbReference type="SMR" id="P05407"/>
<dbReference type="STRING" id="224911.AAV28_07025"/>
<dbReference type="EnsemblBacteria" id="BAC47302">
    <property type="protein sequence ID" value="BAC47302"/>
    <property type="gene ID" value="BAC47302"/>
</dbReference>
<dbReference type="KEGG" id="bja:blr2037"/>
<dbReference type="PATRIC" id="fig|224911.5.peg.1994"/>
<dbReference type="eggNOG" id="COG3604">
    <property type="taxonomic scope" value="Bacteria"/>
</dbReference>
<dbReference type="HOGENOM" id="CLU_000445_95_2_5"/>
<dbReference type="InParanoid" id="P05407"/>
<dbReference type="OrthoDB" id="9761019at2"/>
<dbReference type="Proteomes" id="UP000002526">
    <property type="component" value="Chromosome"/>
</dbReference>
<dbReference type="GO" id="GO:0032993">
    <property type="term" value="C:protein-DNA complex"/>
    <property type="evidence" value="ECO:0000318"/>
    <property type="project" value="GO_Central"/>
</dbReference>
<dbReference type="GO" id="GO:0005524">
    <property type="term" value="F:ATP binding"/>
    <property type="evidence" value="ECO:0007669"/>
    <property type="project" value="UniProtKB-KW"/>
</dbReference>
<dbReference type="GO" id="GO:0016887">
    <property type="term" value="F:ATP hydrolysis activity"/>
    <property type="evidence" value="ECO:0007669"/>
    <property type="project" value="InterPro"/>
</dbReference>
<dbReference type="GO" id="GO:0000987">
    <property type="term" value="F:cis-regulatory region sequence-specific DNA binding"/>
    <property type="evidence" value="ECO:0000318"/>
    <property type="project" value="GO_Central"/>
</dbReference>
<dbReference type="GO" id="GO:0001216">
    <property type="term" value="F:DNA-binding transcription activator activity"/>
    <property type="evidence" value="ECO:0000318"/>
    <property type="project" value="GO_Central"/>
</dbReference>
<dbReference type="GO" id="GO:0046872">
    <property type="term" value="F:metal ion binding"/>
    <property type="evidence" value="ECO:0007669"/>
    <property type="project" value="UniProtKB-KW"/>
</dbReference>
<dbReference type="GO" id="GO:0009399">
    <property type="term" value="P:nitrogen fixation"/>
    <property type="evidence" value="ECO:0007669"/>
    <property type="project" value="UniProtKB-KW"/>
</dbReference>
<dbReference type="GO" id="GO:0000160">
    <property type="term" value="P:phosphorelay signal transduction system"/>
    <property type="evidence" value="ECO:0007669"/>
    <property type="project" value="UniProtKB-KW"/>
</dbReference>
<dbReference type="GO" id="GO:0045893">
    <property type="term" value="P:positive regulation of DNA-templated transcription"/>
    <property type="evidence" value="ECO:0000318"/>
    <property type="project" value="GO_Central"/>
</dbReference>
<dbReference type="CDD" id="cd00009">
    <property type="entry name" value="AAA"/>
    <property type="match status" value="1"/>
</dbReference>
<dbReference type="FunFam" id="3.40.50.300:FF:000006">
    <property type="entry name" value="DNA-binding transcriptional regulator NtrC"/>
    <property type="match status" value="1"/>
</dbReference>
<dbReference type="Gene3D" id="1.10.8.60">
    <property type="match status" value="1"/>
</dbReference>
<dbReference type="Gene3D" id="3.30.450.40">
    <property type="match status" value="1"/>
</dbReference>
<dbReference type="Gene3D" id="1.10.10.60">
    <property type="entry name" value="Homeodomain-like"/>
    <property type="match status" value="1"/>
</dbReference>
<dbReference type="Gene3D" id="3.40.50.300">
    <property type="entry name" value="P-loop containing nucleotide triphosphate hydrolases"/>
    <property type="match status" value="1"/>
</dbReference>
<dbReference type="InterPro" id="IPR003593">
    <property type="entry name" value="AAA+_ATPase"/>
</dbReference>
<dbReference type="InterPro" id="IPR003018">
    <property type="entry name" value="GAF"/>
</dbReference>
<dbReference type="InterPro" id="IPR029016">
    <property type="entry name" value="GAF-like_dom_sf"/>
</dbReference>
<dbReference type="InterPro" id="IPR002197">
    <property type="entry name" value="HTH_Fis"/>
</dbReference>
<dbReference type="InterPro" id="IPR010113">
    <property type="entry name" value="Nif-specific_regulatory_prot"/>
</dbReference>
<dbReference type="InterPro" id="IPR027417">
    <property type="entry name" value="P-loop_NTPase"/>
</dbReference>
<dbReference type="InterPro" id="IPR002078">
    <property type="entry name" value="Sigma_54_int"/>
</dbReference>
<dbReference type="InterPro" id="IPR025662">
    <property type="entry name" value="Sigma_54_int_dom_ATP-bd_1"/>
</dbReference>
<dbReference type="InterPro" id="IPR025943">
    <property type="entry name" value="Sigma_54_int_dom_ATP-bd_2"/>
</dbReference>
<dbReference type="InterPro" id="IPR025944">
    <property type="entry name" value="Sigma_54_int_dom_CS"/>
</dbReference>
<dbReference type="NCBIfam" id="TIGR01817">
    <property type="entry name" value="nifA"/>
    <property type="match status" value="1"/>
</dbReference>
<dbReference type="PANTHER" id="PTHR32071:SF117">
    <property type="entry name" value="PTS-DEPENDENT DIHYDROXYACETONE KINASE OPERON REGULATORY PROTEIN-RELATED"/>
    <property type="match status" value="1"/>
</dbReference>
<dbReference type="PANTHER" id="PTHR32071">
    <property type="entry name" value="TRANSCRIPTIONAL REGULATORY PROTEIN"/>
    <property type="match status" value="1"/>
</dbReference>
<dbReference type="Pfam" id="PF01590">
    <property type="entry name" value="GAF"/>
    <property type="match status" value="1"/>
</dbReference>
<dbReference type="Pfam" id="PF02954">
    <property type="entry name" value="HTH_8"/>
    <property type="match status" value="1"/>
</dbReference>
<dbReference type="Pfam" id="PF00158">
    <property type="entry name" value="Sigma54_activat"/>
    <property type="match status" value="1"/>
</dbReference>
<dbReference type="PRINTS" id="PR01590">
    <property type="entry name" value="HTHFIS"/>
</dbReference>
<dbReference type="SMART" id="SM00382">
    <property type="entry name" value="AAA"/>
    <property type="match status" value="1"/>
</dbReference>
<dbReference type="SMART" id="SM00065">
    <property type="entry name" value="GAF"/>
    <property type="match status" value="1"/>
</dbReference>
<dbReference type="SUPFAM" id="SSF55781">
    <property type="entry name" value="GAF domain-like"/>
    <property type="match status" value="1"/>
</dbReference>
<dbReference type="SUPFAM" id="SSF52540">
    <property type="entry name" value="P-loop containing nucleoside triphosphate hydrolases"/>
    <property type="match status" value="1"/>
</dbReference>
<dbReference type="PROSITE" id="PS00675">
    <property type="entry name" value="SIGMA54_INTERACT_1"/>
    <property type="match status" value="1"/>
</dbReference>
<dbReference type="PROSITE" id="PS00676">
    <property type="entry name" value="SIGMA54_INTERACT_2"/>
    <property type="match status" value="1"/>
</dbReference>
<dbReference type="PROSITE" id="PS00688">
    <property type="entry name" value="SIGMA54_INTERACT_3"/>
    <property type="match status" value="1"/>
</dbReference>
<dbReference type="PROSITE" id="PS50045">
    <property type="entry name" value="SIGMA54_INTERACT_4"/>
    <property type="match status" value="1"/>
</dbReference>
<reference key="1">
    <citation type="journal article" date="1987" name="Nucleic Acids Res.">
        <title>The symbiotic nitrogen fixation regulatory operon (fixRnifA) of Bradyrhizobium japonicum is expressed aerobically and is subject to a novel, nifA-independent type of activation.</title>
        <authorList>
            <person name="Thoeny B."/>
            <person name="Fischer H.-M."/>
            <person name="Anthamatten D."/>
            <person name="Bruderer T."/>
            <person name="Hennecke H."/>
        </authorList>
    </citation>
    <scope>NUCLEOTIDE SEQUENCE [GENOMIC DNA]</scope>
</reference>
<reference key="2">
    <citation type="journal article" date="2002" name="DNA Res.">
        <title>Complete genomic sequence of nitrogen-fixing symbiotic bacterium Bradyrhizobium japonicum USDA110.</title>
        <authorList>
            <person name="Kaneko T."/>
            <person name="Nakamura Y."/>
            <person name="Sato S."/>
            <person name="Minamisawa K."/>
            <person name="Uchiumi T."/>
            <person name="Sasamoto S."/>
            <person name="Watanabe A."/>
            <person name="Idesawa K."/>
            <person name="Iriguchi M."/>
            <person name="Kawashima K."/>
            <person name="Kohara M."/>
            <person name="Matsumoto M."/>
            <person name="Shimpo S."/>
            <person name="Tsuruoka H."/>
            <person name="Wada T."/>
            <person name="Yamada M."/>
            <person name="Tabata S."/>
        </authorList>
    </citation>
    <scope>NUCLEOTIDE SEQUENCE [LARGE SCALE GENOMIC DNA]</scope>
    <source>
        <strain>JCM 10833 / BCRC 13528 / IAM 13628 / NBRC 14792 / USDA 110</strain>
    </source>
</reference>
<reference key="3">
    <citation type="journal article" date="1988" name="Nucleic Acids Res.">
        <title>Essential and non-essential domains in the Bradyrhizobium japonicum NifA protein: identification of indispensable cysteine residues potentially involved in redox reactivity and/or metal binding.</title>
        <authorList>
            <person name="Fischer H.-M."/>
            <person name="Bruderer T."/>
            <person name="Hennecke H."/>
        </authorList>
    </citation>
    <scope>METAL-BINDING</scope>
</reference>
<reference key="4">
    <citation type="journal article" date="1989" name="FEBS Lett.">
        <title>Critical spacing between two essential cysteine residues in the interdomain linker of the Bradyrhizobium japonicum NifA protein.</title>
        <authorList>
            <person name="Fischer H.-M."/>
            <person name="Fritsche S."/>
            <person name="Herzog B."/>
            <person name="Hennecke H."/>
        </authorList>
    </citation>
    <scope>METAL-BINDING</scope>
</reference>
<comment type="function">
    <text>Required for activation of most nif operons, which are directly involved in nitrogen fixation.</text>
</comment>
<comment type="subunit">
    <text>Interacts with sigma-54.</text>
</comment>
<comment type="sequence caution" evidence="4">
    <conflict type="erroneous initiation">
        <sequence resource="EMBL-CDS" id="BAC47302"/>
    </conflict>
</comment>
<comment type="sequence caution" evidence="4">
    <conflict type="erroneous initiation">
        <sequence resource="EMBL-CDS" id="CAA29531"/>
    </conflict>
</comment>
<evidence type="ECO:0000250" key="1"/>
<evidence type="ECO:0000255" key="2">
    <source>
        <dbReference type="PROSITE-ProRule" id="PRU00193"/>
    </source>
</evidence>
<evidence type="ECO:0000256" key="3">
    <source>
        <dbReference type="SAM" id="MobiDB-lite"/>
    </source>
</evidence>
<evidence type="ECO:0000305" key="4"/>
<keyword id="KW-0010">Activator</keyword>
<keyword id="KW-0067">ATP-binding</keyword>
<keyword id="KW-0238">DNA-binding</keyword>
<keyword id="KW-0479">Metal-binding</keyword>
<keyword id="KW-0535">Nitrogen fixation</keyword>
<keyword id="KW-0547">Nucleotide-binding</keyword>
<keyword id="KW-1185">Reference proteome</keyword>
<keyword id="KW-0804">Transcription</keyword>
<keyword id="KW-0805">Transcription regulation</keyword>
<keyword id="KW-0902">Two-component regulatory system</keyword>
<gene>
    <name type="primary">nifA</name>
    <name type="ordered locus">blr2037</name>
</gene>
<proteinExistence type="evidence at protein level"/>
<organism>
    <name type="scientific">Bradyrhizobium diazoefficiens (strain JCM 10833 / BCRC 13528 / IAM 13628 / NBRC 14792 / USDA 110)</name>
    <dbReference type="NCBI Taxonomy" id="224911"/>
    <lineage>
        <taxon>Bacteria</taxon>
        <taxon>Pseudomonadati</taxon>
        <taxon>Pseudomonadota</taxon>
        <taxon>Alphaproteobacteria</taxon>
        <taxon>Hyphomicrobiales</taxon>
        <taxon>Nitrobacteraceae</taxon>
        <taxon>Bradyrhizobium</taxon>
    </lineage>
</organism>
<feature type="chain" id="PRO_0000081305" description="Nif-specific regulatory protein">
    <location>
        <begin position="1"/>
        <end position="582"/>
    </location>
</feature>
<feature type="domain" description="GAF">
    <location>
        <begin position="46"/>
        <end position="188"/>
    </location>
</feature>
<feature type="domain" description="Sigma-54 factor interaction" evidence="2">
    <location>
        <begin position="230"/>
        <end position="458"/>
    </location>
</feature>
<feature type="DNA-binding region" description="H-T-H motif" evidence="1">
    <location>
        <begin position="554"/>
        <end position="573"/>
    </location>
</feature>
<feature type="region of interest" description="Disordered" evidence="3">
    <location>
        <begin position="1"/>
        <end position="28"/>
    </location>
</feature>
<feature type="region of interest" description="Inter-domain linker">
    <location>
        <begin position="459"/>
        <end position="539"/>
    </location>
</feature>
<feature type="region of interest" description="C-terminal DNA-binding domain">
    <location>
        <begin position="540"/>
        <end position="582"/>
    </location>
</feature>
<feature type="compositionally biased region" description="Polar residues" evidence="3">
    <location>
        <begin position="1"/>
        <end position="11"/>
    </location>
</feature>
<feature type="compositionally biased region" description="Basic and acidic residues" evidence="3">
    <location>
        <begin position="16"/>
        <end position="27"/>
    </location>
</feature>
<feature type="binding site" evidence="2">
    <location>
        <begin position="258"/>
        <end position="265"/>
    </location>
    <ligand>
        <name>ATP</name>
        <dbReference type="ChEBI" id="CHEBI:30616"/>
    </ligand>
</feature>
<feature type="binding site" evidence="2">
    <location>
        <begin position="321"/>
        <end position="330"/>
    </location>
    <ligand>
        <name>ATP</name>
        <dbReference type="ChEBI" id="CHEBI:30616"/>
    </ligand>
</feature>
<feature type="binding site" evidence="4">
    <location>
        <position position="472"/>
    </location>
    <ligand>
        <name>a divalent metal cation</name>
        <dbReference type="ChEBI" id="CHEBI:60240"/>
    </ligand>
</feature>
<feature type="binding site" evidence="4">
    <location>
        <position position="477"/>
    </location>
    <ligand>
        <name>a divalent metal cation</name>
        <dbReference type="ChEBI" id="CHEBI:60240"/>
    </ligand>
</feature>
<feature type="sequence conflict" description="In Ref. 1; CAA29532/CAA29531." evidence="4" ref="1">
    <original>KQ</original>
    <variation>NE</variation>
    <location>
        <begin position="223"/>
        <end position="224"/>
    </location>
</feature>
<sequence>MLHIPSSSERPASQPEPERAPPGEPSHESALAGIYEISKILNAPGRLEVTLANVLGLLQSFVQMRHGLVSLFNDDGVPELTVGAGWSEGTDERYRTCVPQKAIHEIVATGRSLMVENVAAETAFSAADREVLGASDSIPVAFIGVPIRVDSTVVGTLTIDRIPEGSSSLLEYDARLLAMVANVIGQTIKLHRLFAGDREQSLVDKDRLEKQTVDRGPPARERKQLQAHGIIGDSPALSALLEKIVVVARSNSTVLLRGESGTGKELVAKAIHESSVRAKRPFVKLNCAALPETVLESELFGHEKGAFTGAVSARKGRFELADKGTLFLDEIGEISPPFQAKLLRVLQEQEFERVGSNHTIKVDVRVIAATNRNLEEAVARSEFRADLYYRISVVPLLLPPLRERRSDIPLLAREFLRKFNSENGRSLTLEASAIDVLMSCKFPGNVRELENCIERTATLSAGTSIVRSDFACSQGQCLSTTLWKSTSYGKTDPAAPMQPVPAKSIIPLAETAPPPQAVCEPGSLAPSGTVLVSGARMADRERVVAAMEKSGWVQAKAARLLGLTPRQVGYALRKYGIEIKRF</sequence>